<organism>
    <name type="scientific">Escherichia coli O139:H28 (strain E24377A / ETEC)</name>
    <dbReference type="NCBI Taxonomy" id="331111"/>
    <lineage>
        <taxon>Bacteria</taxon>
        <taxon>Pseudomonadati</taxon>
        <taxon>Pseudomonadota</taxon>
        <taxon>Gammaproteobacteria</taxon>
        <taxon>Enterobacterales</taxon>
        <taxon>Enterobacteriaceae</taxon>
        <taxon>Escherichia</taxon>
    </lineage>
</organism>
<sequence>MMVIRPVERSDVSALMQLASKTGGGLTSLPANEATLSARIERAIKTWQGELPKSEQGYVFVLEDSETGTVAGICAIEVAVGLNDPWYNYRVGTLVHASKELNVYNALPTLFLSNDHTGSSELCTLFLDPDWRKEGNGYLLSKSRFMFMAAFRDKFNDKVVAEMRGVIDEHGYSPFWQSLGKRFFSMDFSRADFLCGTGQKAFIAELMPKHPIYTHFLSQEAQDVIGQVHPQTAPARAVLEKEGFRYRNYIDIFDGGPTLECDIDRVRAIRKSRLVEVAEGQPAQGDFPACLVANENYHHFRVVLARTDPATERLILTAAQLDALKCHAGDRVRLVRLCAEEKTA</sequence>
<dbReference type="EC" id="2.3.1.109" evidence="1"/>
<dbReference type="EMBL" id="CP000800">
    <property type="protein sequence ID" value="ABV19241.1"/>
    <property type="molecule type" value="Genomic_DNA"/>
</dbReference>
<dbReference type="RefSeq" id="WP_000989414.1">
    <property type="nucleotide sequence ID" value="NC_009801.1"/>
</dbReference>
<dbReference type="SMR" id="A7ZML5"/>
<dbReference type="GeneID" id="75203053"/>
<dbReference type="KEGG" id="ecw:EcE24377A_1969"/>
<dbReference type="HOGENOM" id="CLU_057655_0_0_6"/>
<dbReference type="UniPathway" id="UPA00185">
    <property type="reaction ID" value="UER00279"/>
</dbReference>
<dbReference type="Proteomes" id="UP000001122">
    <property type="component" value="Chromosome"/>
</dbReference>
<dbReference type="GO" id="GO:0008791">
    <property type="term" value="F:arginine N-succinyltransferase activity"/>
    <property type="evidence" value="ECO:0007669"/>
    <property type="project" value="UniProtKB-UniRule"/>
</dbReference>
<dbReference type="GO" id="GO:0019544">
    <property type="term" value="P:arginine catabolic process to glutamate"/>
    <property type="evidence" value="ECO:0007669"/>
    <property type="project" value="UniProtKB-UniRule"/>
</dbReference>
<dbReference type="GO" id="GO:0019545">
    <property type="term" value="P:arginine catabolic process to succinate"/>
    <property type="evidence" value="ECO:0007669"/>
    <property type="project" value="UniProtKB-UniRule"/>
</dbReference>
<dbReference type="Gene3D" id="2.40.40.20">
    <property type="match status" value="1"/>
</dbReference>
<dbReference type="Gene3D" id="3.40.630.30">
    <property type="match status" value="1"/>
</dbReference>
<dbReference type="HAMAP" id="MF_01171">
    <property type="entry name" value="AstA"/>
    <property type="match status" value="1"/>
</dbReference>
<dbReference type="InterPro" id="IPR016181">
    <property type="entry name" value="Acyl_CoA_acyltransferase"/>
</dbReference>
<dbReference type="InterPro" id="IPR007041">
    <property type="entry name" value="Arg_succinylTrfase_AstA/AruG"/>
</dbReference>
<dbReference type="InterPro" id="IPR017650">
    <property type="entry name" value="Arginine_N-succinylTrfase"/>
</dbReference>
<dbReference type="NCBIfam" id="TIGR03243">
    <property type="entry name" value="arg_catab_AOST"/>
    <property type="match status" value="1"/>
</dbReference>
<dbReference type="NCBIfam" id="TIGR03244">
    <property type="entry name" value="arg_catab_AstA"/>
    <property type="match status" value="1"/>
</dbReference>
<dbReference type="NCBIfam" id="NF007770">
    <property type="entry name" value="PRK10456.1"/>
    <property type="match status" value="1"/>
</dbReference>
<dbReference type="PANTHER" id="PTHR30420:SF1">
    <property type="entry name" value="ARGININE N-SUCCINYLTRANSFERASE"/>
    <property type="match status" value="1"/>
</dbReference>
<dbReference type="PANTHER" id="PTHR30420">
    <property type="entry name" value="N-SUCCINYLARGININE DIHYDROLASE"/>
    <property type="match status" value="1"/>
</dbReference>
<dbReference type="Pfam" id="PF04958">
    <property type="entry name" value="AstA"/>
    <property type="match status" value="1"/>
</dbReference>
<dbReference type="SUPFAM" id="SSF55729">
    <property type="entry name" value="Acyl-CoA N-acyltransferases (Nat)"/>
    <property type="match status" value="1"/>
</dbReference>
<protein>
    <recommendedName>
        <fullName evidence="1">Arginine N-succinyltransferase</fullName>
        <shortName evidence="1">AST</shortName>
        <ecNumber evidence="1">2.3.1.109</ecNumber>
    </recommendedName>
    <alternativeName>
        <fullName evidence="1">AOST</fullName>
    </alternativeName>
</protein>
<feature type="chain" id="PRO_1000065706" description="Arginine N-succinyltransferase">
    <location>
        <begin position="1"/>
        <end position="344"/>
    </location>
</feature>
<feature type="active site" description="Proton donor" evidence="1">
    <location>
        <position position="229"/>
    </location>
</feature>
<feature type="binding site" evidence="1">
    <location>
        <position position="125"/>
    </location>
    <ligand>
        <name>succinyl-CoA</name>
        <dbReference type="ChEBI" id="CHEBI:57292"/>
    </ligand>
</feature>
<accession>A7ZML5</accession>
<gene>
    <name evidence="1" type="primary">astA</name>
    <name type="ordered locus">EcE24377A_1969</name>
</gene>
<reference key="1">
    <citation type="journal article" date="2008" name="J. Bacteriol.">
        <title>The pangenome structure of Escherichia coli: comparative genomic analysis of E. coli commensal and pathogenic isolates.</title>
        <authorList>
            <person name="Rasko D.A."/>
            <person name="Rosovitz M.J."/>
            <person name="Myers G.S.A."/>
            <person name="Mongodin E.F."/>
            <person name="Fricke W.F."/>
            <person name="Gajer P."/>
            <person name="Crabtree J."/>
            <person name="Sebaihia M."/>
            <person name="Thomson N.R."/>
            <person name="Chaudhuri R."/>
            <person name="Henderson I.R."/>
            <person name="Sperandio V."/>
            <person name="Ravel J."/>
        </authorList>
    </citation>
    <scope>NUCLEOTIDE SEQUENCE [LARGE SCALE GENOMIC DNA]</scope>
    <source>
        <strain>E24377A / ETEC</strain>
    </source>
</reference>
<evidence type="ECO:0000255" key="1">
    <source>
        <dbReference type="HAMAP-Rule" id="MF_01171"/>
    </source>
</evidence>
<name>ASTA_ECO24</name>
<proteinExistence type="inferred from homology"/>
<comment type="function">
    <text evidence="1">Catalyzes the transfer of succinyl-CoA to arginine to produce N(2)-succinylarginine.</text>
</comment>
<comment type="catalytic activity">
    <reaction evidence="1">
        <text>succinyl-CoA + L-arginine = N(2)-succinyl-L-arginine + CoA + H(+)</text>
        <dbReference type="Rhea" id="RHEA:15185"/>
        <dbReference type="ChEBI" id="CHEBI:15378"/>
        <dbReference type="ChEBI" id="CHEBI:32682"/>
        <dbReference type="ChEBI" id="CHEBI:57287"/>
        <dbReference type="ChEBI" id="CHEBI:57292"/>
        <dbReference type="ChEBI" id="CHEBI:58241"/>
        <dbReference type="EC" id="2.3.1.109"/>
    </reaction>
</comment>
<comment type="pathway">
    <text evidence="1">Amino-acid degradation; L-arginine degradation via AST pathway; L-glutamate and succinate from L-arginine: step 1/5.</text>
</comment>
<comment type="similarity">
    <text evidence="1">Belongs to the arginine N-succinyltransferase family.</text>
</comment>
<keyword id="KW-0012">Acyltransferase</keyword>
<keyword id="KW-0056">Arginine metabolism</keyword>
<keyword id="KW-1185">Reference proteome</keyword>
<keyword id="KW-0808">Transferase</keyword>